<feature type="initiator methionine" description="Removed; by host">
    <location>
        <position position="1"/>
    </location>
</feature>
<feature type="chain" id="PRO_0000164635" description="RNA-directed RNA polymerase">
    <location>
        <begin position="2"/>
        <end position="665"/>
    </location>
</feature>
<feature type="domain" description="RdRp catalytic" evidence="1">
    <location>
        <begin position="310"/>
        <end position="485"/>
    </location>
</feature>
<feature type="binding site">
    <location>
        <position position="454"/>
    </location>
    <ligand>
        <name>Mg(2+)</name>
        <dbReference type="ChEBI" id="CHEBI:18420"/>
    </ligand>
</feature>
<feature type="binding site">
    <location>
        <position position="491"/>
    </location>
    <ligand>
        <name>Mg(2+)</name>
        <dbReference type="ChEBI" id="CHEBI:18420"/>
    </ligand>
</feature>
<feature type="binding site">
    <location>
        <position position="495"/>
    </location>
    <ligand>
        <name>Mg(2+)</name>
        <dbReference type="ChEBI" id="CHEBI:18420"/>
    </ligand>
</feature>
<feature type="strand" evidence="5">
    <location>
        <begin position="7"/>
        <end position="9"/>
    </location>
</feature>
<feature type="helix" evidence="5">
    <location>
        <begin position="13"/>
        <end position="16"/>
    </location>
</feature>
<feature type="helix" evidence="5">
    <location>
        <begin position="23"/>
        <end position="30"/>
    </location>
</feature>
<feature type="strand" evidence="5">
    <location>
        <begin position="39"/>
        <end position="41"/>
    </location>
</feature>
<feature type="helix" evidence="5">
    <location>
        <begin position="49"/>
        <end position="65"/>
    </location>
</feature>
<feature type="helix" evidence="5">
    <location>
        <begin position="86"/>
        <end position="88"/>
    </location>
</feature>
<feature type="strand" evidence="5">
    <location>
        <begin position="90"/>
        <end position="95"/>
    </location>
</feature>
<feature type="helix" evidence="5">
    <location>
        <begin position="107"/>
        <end position="112"/>
    </location>
</feature>
<feature type="helix" evidence="5">
    <location>
        <begin position="122"/>
        <end position="136"/>
    </location>
</feature>
<feature type="strand" evidence="5">
    <location>
        <begin position="145"/>
        <end position="147"/>
    </location>
</feature>
<feature type="turn" evidence="5">
    <location>
        <begin position="154"/>
        <end position="156"/>
    </location>
</feature>
<feature type="helix" evidence="5">
    <location>
        <begin position="161"/>
        <end position="183"/>
    </location>
</feature>
<feature type="helix" evidence="5">
    <location>
        <begin position="187"/>
        <end position="194"/>
    </location>
</feature>
<feature type="strand" evidence="5">
    <location>
        <begin position="200"/>
        <end position="207"/>
    </location>
</feature>
<feature type="strand" evidence="5">
    <location>
        <begin position="212"/>
        <end position="215"/>
    </location>
</feature>
<feature type="turn" evidence="5">
    <location>
        <begin position="216"/>
        <end position="219"/>
    </location>
</feature>
<feature type="strand" evidence="5">
    <location>
        <begin position="220"/>
        <end position="223"/>
    </location>
</feature>
<feature type="strand" evidence="5">
    <location>
        <begin position="227"/>
        <end position="229"/>
    </location>
</feature>
<feature type="helix" evidence="5">
    <location>
        <begin position="231"/>
        <end position="235"/>
    </location>
</feature>
<feature type="turn" evidence="5">
    <location>
        <begin position="236"/>
        <end position="238"/>
    </location>
</feature>
<feature type="strand" evidence="5">
    <location>
        <begin position="239"/>
        <end position="241"/>
    </location>
</feature>
<feature type="strand" evidence="5">
    <location>
        <begin position="243"/>
        <end position="245"/>
    </location>
</feature>
<feature type="helix" evidence="5">
    <location>
        <begin position="252"/>
        <end position="257"/>
    </location>
</feature>
<feature type="strand" evidence="5">
    <location>
        <begin position="266"/>
        <end position="275"/>
    </location>
</feature>
<feature type="helix" evidence="5">
    <location>
        <begin position="278"/>
        <end position="297"/>
    </location>
</feature>
<feature type="helix" evidence="5">
    <location>
        <begin position="300"/>
        <end position="303"/>
    </location>
</feature>
<feature type="helix" evidence="5">
    <location>
        <begin position="308"/>
        <end position="316"/>
    </location>
</feature>
<feature type="strand" evidence="5">
    <location>
        <begin position="319"/>
        <end position="328"/>
    </location>
</feature>
<feature type="helix" evidence="5">
    <location>
        <begin position="329"/>
        <end position="332"/>
    </location>
</feature>
<feature type="helix" evidence="5">
    <location>
        <begin position="335"/>
        <end position="348"/>
    </location>
</feature>
<feature type="helix" evidence="5">
    <location>
        <begin position="352"/>
        <end position="361"/>
    </location>
</feature>
<feature type="strand" evidence="5">
    <location>
        <begin position="366"/>
        <end position="368"/>
    </location>
</feature>
<feature type="strand" evidence="5">
    <location>
        <begin position="378"/>
        <end position="381"/>
    </location>
</feature>
<feature type="strand" evidence="7">
    <location>
        <begin position="396"/>
        <end position="398"/>
    </location>
</feature>
<feature type="helix" evidence="5">
    <location>
        <begin position="399"/>
        <end position="419"/>
    </location>
</feature>
<feature type="helix" evidence="5">
    <location>
        <begin position="421"/>
        <end position="426"/>
    </location>
</feature>
<feature type="helix" evidence="5">
    <location>
        <begin position="430"/>
        <end position="441"/>
    </location>
</feature>
<feature type="strand" evidence="5">
    <location>
        <begin position="445"/>
        <end position="452"/>
    </location>
</feature>
<feature type="strand" evidence="5">
    <location>
        <begin position="455"/>
        <end position="460"/>
    </location>
</feature>
<feature type="strand" evidence="7">
    <location>
        <begin position="462"/>
        <end position="464"/>
    </location>
</feature>
<feature type="helix" evidence="5">
    <location>
        <begin position="465"/>
        <end position="478"/>
    </location>
</feature>
<feature type="strand" evidence="5">
    <location>
        <begin position="485"/>
        <end position="487"/>
    </location>
</feature>
<feature type="strand" evidence="5">
    <location>
        <begin position="489"/>
        <end position="491"/>
    </location>
</feature>
<feature type="strand" evidence="5">
    <location>
        <begin position="500"/>
        <end position="503"/>
    </location>
</feature>
<feature type="helix" evidence="5">
    <location>
        <begin position="510"/>
        <end position="512"/>
    </location>
</feature>
<feature type="strand" evidence="5">
    <location>
        <begin position="514"/>
        <end position="517"/>
    </location>
</feature>
<feature type="helix" evidence="5">
    <location>
        <begin position="519"/>
        <end position="527"/>
    </location>
</feature>
<feature type="helix" evidence="5">
    <location>
        <begin position="540"/>
        <end position="542"/>
    </location>
</feature>
<feature type="strand" evidence="5">
    <location>
        <begin position="543"/>
        <end position="546"/>
    </location>
</feature>
<feature type="helix" evidence="5">
    <location>
        <begin position="548"/>
        <end position="550"/>
    </location>
</feature>
<feature type="helix" evidence="5">
    <location>
        <begin position="551"/>
        <end position="559"/>
    </location>
</feature>
<feature type="helix" evidence="5">
    <location>
        <begin position="565"/>
        <end position="580"/>
    </location>
</feature>
<feature type="helix" evidence="5">
    <location>
        <begin position="584"/>
        <end position="599"/>
    </location>
</feature>
<feature type="turn" evidence="5">
    <location>
        <begin position="600"/>
        <end position="602"/>
    </location>
</feature>
<feature type="strand" evidence="6">
    <location>
        <begin position="604"/>
        <end position="606"/>
    </location>
</feature>
<feature type="strand" evidence="7">
    <location>
        <begin position="608"/>
        <end position="610"/>
    </location>
</feature>
<feature type="helix" evidence="4">
    <location>
        <begin position="612"/>
        <end position="614"/>
    </location>
</feature>
<feature type="helix" evidence="5">
    <location>
        <begin position="617"/>
        <end position="624"/>
    </location>
</feature>
<feature type="helix" evidence="5">
    <location>
        <begin position="626"/>
        <end position="629"/>
    </location>
</feature>
<feature type="turn" evidence="5">
    <location>
        <begin position="630"/>
        <end position="632"/>
    </location>
</feature>
<feature type="helix" evidence="5">
    <location>
        <begin position="635"/>
        <end position="637"/>
    </location>
</feature>
<feature type="helix" evidence="5">
    <location>
        <begin position="640"/>
        <end position="646"/>
    </location>
</feature>
<feature type="strand" evidence="5">
    <location>
        <begin position="647"/>
        <end position="649"/>
    </location>
</feature>
<feature type="helix" evidence="5">
    <location>
        <begin position="652"/>
        <end position="662"/>
    </location>
</feature>
<gene>
    <name type="primary">P2</name>
</gene>
<organism>
    <name type="scientific">Pseudomonas phage phi6</name>
    <name type="common">Bacteriophage phi-6</name>
    <dbReference type="NCBI Taxonomy" id="2928686"/>
    <lineage>
        <taxon>Viruses</taxon>
        <taxon>Riboviria</taxon>
        <taxon>Orthornavirae</taxon>
        <taxon>Duplornaviricota</taxon>
        <taxon>Vidaverviricetes</taxon>
        <taxon>Mindivirales</taxon>
        <taxon>Cystoviridae</taxon>
        <taxon>Cystovirus</taxon>
        <taxon>Cystovirus phi6</taxon>
    </lineage>
</organism>
<keyword id="KW-0002">3D-structure</keyword>
<keyword id="KW-0903">Direct protein sequencing</keyword>
<keyword id="KW-0460">Magnesium</keyword>
<keyword id="KW-0464">Manganese</keyword>
<keyword id="KW-0479">Metal-binding</keyword>
<keyword id="KW-0547">Nucleotide-binding</keyword>
<keyword id="KW-0548">Nucleotidyltransferase</keyword>
<keyword id="KW-1185">Reference proteome</keyword>
<keyword id="KW-0696">RNA-directed RNA polymerase</keyword>
<keyword id="KW-0808">Transferase</keyword>
<keyword id="KW-0693">Viral RNA replication</keyword>
<keyword id="KW-0946">Virion</keyword>
<organismHost>
    <name type="scientific">Pseudomonas savastanoi pv. phaseolicola</name>
    <name type="common">Pseudomonas syringae pv. phaseolicola</name>
    <dbReference type="NCBI Taxonomy" id="319"/>
</organismHost>
<proteinExistence type="evidence at protein level"/>
<dbReference type="EC" id="2.7.7.48"/>
<dbReference type="EMBL" id="M17461">
    <property type="protein sequence ID" value="AAA32355.1"/>
    <property type="molecule type" value="Genomic_RNA"/>
</dbReference>
<dbReference type="PIR" id="B29885">
    <property type="entry name" value="P2BPF6"/>
</dbReference>
<dbReference type="PDB" id="1HHS">
    <property type="method" value="X-ray"/>
    <property type="resolution" value="2.00 A"/>
    <property type="chains" value="A/B/C=2-665"/>
</dbReference>
<dbReference type="PDB" id="1HHT">
    <property type="method" value="X-ray"/>
    <property type="resolution" value="2.90 A"/>
    <property type="chains" value="P/Q/R=2-665"/>
</dbReference>
<dbReference type="PDB" id="1HI0">
    <property type="method" value="X-ray"/>
    <property type="resolution" value="3.00 A"/>
    <property type="chains" value="P/Q/R=2-665"/>
</dbReference>
<dbReference type="PDB" id="1HI1">
    <property type="method" value="X-ray"/>
    <property type="resolution" value="3.00 A"/>
    <property type="chains" value="A/B/C=2-665"/>
</dbReference>
<dbReference type="PDB" id="1HI8">
    <property type="method" value="X-ray"/>
    <property type="resolution" value="2.50 A"/>
    <property type="chains" value="A/B=2-665"/>
</dbReference>
<dbReference type="PDB" id="1UVI">
    <property type="method" value="X-ray"/>
    <property type="resolution" value="2.15 A"/>
    <property type="chains" value="A/B/C=2-665"/>
</dbReference>
<dbReference type="PDB" id="1UVJ">
    <property type="method" value="X-ray"/>
    <property type="resolution" value="1.90 A"/>
    <property type="chains" value="A/B/C=2-665"/>
</dbReference>
<dbReference type="PDB" id="1UVK">
    <property type="method" value="X-ray"/>
    <property type="resolution" value="2.45 A"/>
    <property type="chains" value="A/C/E=2-665"/>
</dbReference>
<dbReference type="PDB" id="1UVL">
    <property type="method" value="X-ray"/>
    <property type="resolution" value="2.00 A"/>
    <property type="chains" value="A/C/E=2-665"/>
</dbReference>
<dbReference type="PDB" id="1UVM">
    <property type="method" value="X-ray"/>
    <property type="resolution" value="2.00 A"/>
    <property type="chains" value="A/B/C=2-665"/>
</dbReference>
<dbReference type="PDB" id="1UVN">
    <property type="method" value="X-ray"/>
    <property type="resolution" value="3.00 A"/>
    <property type="chains" value="A/C/E=2-665"/>
</dbReference>
<dbReference type="PDB" id="1WAC">
    <property type="method" value="X-ray"/>
    <property type="resolution" value="3.00 A"/>
    <property type="chains" value="A/B/C=2-665"/>
</dbReference>
<dbReference type="PDB" id="2JL9">
    <property type="method" value="X-ray"/>
    <property type="resolution" value="3.20 A"/>
    <property type="chains" value="A/B/C=1-665"/>
</dbReference>
<dbReference type="PDB" id="2JLF">
    <property type="method" value="X-ray"/>
    <property type="resolution" value="3.20 A"/>
    <property type="chains" value="A/B/C=2-665"/>
</dbReference>
<dbReference type="PDB" id="2JLG">
    <property type="method" value="X-ray"/>
    <property type="resolution" value="2.80 A"/>
    <property type="chains" value="A/B/C=2-665"/>
</dbReference>
<dbReference type="PDB" id="4A8F">
    <property type="method" value="X-ray"/>
    <property type="resolution" value="3.30 A"/>
    <property type="chains" value="A/B/C=1-665"/>
</dbReference>
<dbReference type="PDB" id="4A8K">
    <property type="method" value="X-ray"/>
    <property type="resolution" value="3.50 A"/>
    <property type="chains" value="A/B/C=1-665"/>
</dbReference>
<dbReference type="PDB" id="4A8M">
    <property type="method" value="X-ray"/>
    <property type="resolution" value="2.92 A"/>
    <property type="chains" value="P/Q/R=1-665"/>
</dbReference>
<dbReference type="PDB" id="4A8O">
    <property type="method" value="X-ray"/>
    <property type="resolution" value="2.67 A"/>
    <property type="chains" value="A/B/C=1-665"/>
</dbReference>
<dbReference type="PDB" id="4A8Q">
    <property type="method" value="X-ray"/>
    <property type="resolution" value="3.06 A"/>
    <property type="chains" value="A/B/C=1-665"/>
</dbReference>
<dbReference type="PDB" id="4A8S">
    <property type="method" value="X-ray"/>
    <property type="resolution" value="2.90 A"/>
    <property type="chains" value="A/B/C=1-665"/>
</dbReference>
<dbReference type="PDB" id="4A8W">
    <property type="method" value="X-ray"/>
    <property type="resolution" value="3.04 A"/>
    <property type="chains" value="A/B/C=1-665"/>
</dbReference>
<dbReference type="PDB" id="4A8Y">
    <property type="method" value="X-ray"/>
    <property type="resolution" value="3.41 A"/>
    <property type="chains" value="A/B/C=1-665"/>
</dbReference>
<dbReference type="PDB" id="4B02">
    <property type="method" value="X-ray"/>
    <property type="resolution" value="3.30 A"/>
    <property type="chains" value="A/B/C=2-665"/>
</dbReference>
<dbReference type="PDB" id="5FJ6">
    <property type="method" value="EM"/>
    <property type="resolution" value="7.90 A"/>
    <property type="chains" value="A=2-665"/>
</dbReference>
<dbReference type="PDB" id="5FJ7">
    <property type="method" value="EM"/>
    <property type="resolution" value="7.90 A"/>
    <property type="chains" value="C=2-665"/>
</dbReference>
<dbReference type="PDBsum" id="1HHS"/>
<dbReference type="PDBsum" id="1HHT"/>
<dbReference type="PDBsum" id="1HI0"/>
<dbReference type="PDBsum" id="1HI1"/>
<dbReference type="PDBsum" id="1HI8"/>
<dbReference type="PDBsum" id="1UVI"/>
<dbReference type="PDBsum" id="1UVJ"/>
<dbReference type="PDBsum" id="1UVK"/>
<dbReference type="PDBsum" id="1UVL"/>
<dbReference type="PDBsum" id="1UVM"/>
<dbReference type="PDBsum" id="1UVN"/>
<dbReference type="PDBsum" id="1WAC"/>
<dbReference type="PDBsum" id="2JL9"/>
<dbReference type="PDBsum" id="2JLF"/>
<dbReference type="PDBsum" id="2JLG"/>
<dbReference type="PDBsum" id="4A8F"/>
<dbReference type="PDBsum" id="4A8K"/>
<dbReference type="PDBsum" id="4A8M"/>
<dbReference type="PDBsum" id="4A8O"/>
<dbReference type="PDBsum" id="4A8Q"/>
<dbReference type="PDBsum" id="4A8S"/>
<dbReference type="PDBsum" id="4A8W"/>
<dbReference type="PDBsum" id="4A8Y"/>
<dbReference type="PDBsum" id="4B02"/>
<dbReference type="PDBsum" id="5FJ6"/>
<dbReference type="PDBsum" id="5FJ7"/>
<dbReference type="EMDB" id="EMD-3185"/>
<dbReference type="EMDB" id="EMD-3186"/>
<dbReference type="EMDB" id="EMD-3187"/>
<dbReference type="SMR" id="P11124"/>
<dbReference type="DrugBank" id="DB04137">
    <property type="generic name" value="Guanosine-5'-Triphosphate"/>
</dbReference>
<dbReference type="KEGG" id="vg:956436"/>
<dbReference type="BRENDA" id="2.7.7.48">
    <property type="organism ID" value="718"/>
</dbReference>
<dbReference type="EvolutionaryTrace" id="P11124"/>
<dbReference type="Proteomes" id="UP000002610">
    <property type="component" value="Genome"/>
</dbReference>
<dbReference type="GO" id="GO:0044423">
    <property type="term" value="C:virion component"/>
    <property type="evidence" value="ECO:0007669"/>
    <property type="project" value="UniProtKB-KW"/>
</dbReference>
<dbReference type="GO" id="GO:0046872">
    <property type="term" value="F:metal ion binding"/>
    <property type="evidence" value="ECO:0007669"/>
    <property type="project" value="UniProtKB-KW"/>
</dbReference>
<dbReference type="GO" id="GO:0000166">
    <property type="term" value="F:nucleotide binding"/>
    <property type="evidence" value="ECO:0007669"/>
    <property type="project" value="UniProtKB-KW"/>
</dbReference>
<dbReference type="GO" id="GO:0003723">
    <property type="term" value="F:RNA binding"/>
    <property type="evidence" value="ECO:0007669"/>
    <property type="project" value="InterPro"/>
</dbReference>
<dbReference type="GO" id="GO:0050265">
    <property type="term" value="F:RNA uridylyltransferase activity"/>
    <property type="evidence" value="ECO:0000314"/>
    <property type="project" value="CACAO"/>
</dbReference>
<dbReference type="GO" id="GO:0003968">
    <property type="term" value="F:RNA-directed RNA polymerase activity"/>
    <property type="evidence" value="ECO:0000314"/>
    <property type="project" value="CACAO"/>
</dbReference>
<dbReference type="GO" id="GO:0006351">
    <property type="term" value="P:DNA-templated transcription"/>
    <property type="evidence" value="ECO:0007669"/>
    <property type="project" value="InterPro"/>
</dbReference>
<dbReference type="GO" id="GO:0039694">
    <property type="term" value="P:viral RNA genome replication"/>
    <property type="evidence" value="ECO:0007669"/>
    <property type="project" value="InterPro"/>
</dbReference>
<dbReference type="FunFam" id="3.30.70.1600:FF:000002">
    <property type="match status" value="1"/>
</dbReference>
<dbReference type="FunFam" id="3.30.70.1600:FF:000001">
    <property type="entry name" value="RNA-directed RNA polymerase"/>
    <property type="match status" value="1"/>
</dbReference>
<dbReference type="Gene3D" id="3.30.70.1600">
    <property type="match status" value="2"/>
</dbReference>
<dbReference type="Gene3D" id="6.20.410.10">
    <property type="match status" value="1"/>
</dbReference>
<dbReference type="Gene3D" id="1.10.490.60">
    <property type="entry name" value="Phage p2 RNA dependent RNA polymerase domain"/>
    <property type="match status" value="2"/>
</dbReference>
<dbReference type="InterPro" id="IPR016406">
    <property type="entry name" value="Cystovir_RNA-dir_pol"/>
</dbReference>
<dbReference type="InterPro" id="IPR043110">
    <property type="entry name" value="Cystovir_RNA-dir_pol_N"/>
</dbReference>
<dbReference type="InterPro" id="IPR043502">
    <property type="entry name" value="DNA/RNA_pol_sf"/>
</dbReference>
<dbReference type="InterPro" id="IPR001205">
    <property type="entry name" value="RNA-dir_pol_C"/>
</dbReference>
<dbReference type="InterPro" id="IPR007096">
    <property type="entry name" value="RNA-dir_Rpol_cat_phage"/>
</dbReference>
<dbReference type="Pfam" id="PF00680">
    <property type="entry name" value="RdRP_1"/>
    <property type="match status" value="1"/>
</dbReference>
<dbReference type="PIRSF" id="PIRSF004131">
    <property type="entry name" value="RNA_pol_phage_P2"/>
    <property type="match status" value="1"/>
</dbReference>
<dbReference type="SUPFAM" id="SSF56672">
    <property type="entry name" value="DNA/RNA polymerases"/>
    <property type="match status" value="1"/>
</dbReference>
<dbReference type="PROSITE" id="PS50522">
    <property type="entry name" value="RDRP_PHAGE"/>
    <property type="match status" value="1"/>
</dbReference>
<name>RDRP_BPPH6</name>
<evidence type="ECO:0000255" key="1">
    <source>
        <dbReference type="PROSITE-ProRule" id="PRU00539"/>
    </source>
</evidence>
<evidence type="ECO:0000305" key="2">
    <source>
    </source>
</evidence>
<evidence type="ECO:0000305" key="3">
    <source>
    </source>
</evidence>
<evidence type="ECO:0007829" key="4">
    <source>
        <dbReference type="PDB" id="1HI1"/>
    </source>
</evidence>
<evidence type="ECO:0007829" key="5">
    <source>
        <dbReference type="PDB" id="1UVJ"/>
    </source>
</evidence>
<evidence type="ECO:0007829" key="6">
    <source>
        <dbReference type="PDB" id="1UVL"/>
    </source>
</evidence>
<evidence type="ECO:0007829" key="7">
    <source>
        <dbReference type="PDB" id="2JLG"/>
    </source>
</evidence>
<sequence>MPRRAPAFPLSDIKAQMLFANNIKAQQASKRSFKEGAIETYEGLLSVDPRFLSFKNELSRYLTDHFPANVDEYGRVYGNGVRTNFFGMRHMNGFPMIPATWPLASNLKKRADADLADGPVSERDNLLFRAAVRLMFSDLEPVPLKIRKGSSTCIPYFSNDMGTKIEIAERALEKAEEAGNLMLQGKFDDAYQLHQMGGAYYVVYRAQSTDAITLDPKTGKFVSKDRMVADFEYAVTGGEQGSLFAASKDASRLKEQYGIDVPDGFFCERRRTAMGGPFALNAPIMAVAQPVRNKIYSKYAYTFHHTTRLNKEEKVKEWSLCVATDVSDHDTFWPGWLRDLICDELLNMGYAPWWVKLFETSLKLPVYVGAPAPEQGHTLLGDPSNPDLEVGLSSGQGATDLMGTLLMSITYLVMQLDHTAPHLNSRIKDMPSACRFLDSYWQGHEEIRQISKSDDAILGWTKGRALVGGHRLFEMLKEGKVNPSPYMKISYEHGGAFLGDILLYDSRREPGSAIFVGNINSMLNNQFSPEYGVQSGVRDRSKRKRPFPGLAWASMKDTYGACPIYSDVLEAIERCWWNAFGESYRAYREDMLKRDTLELSRYVASMARQAGLAELTPIDLEVLADPNKLQYKWTEADVSANIHEVLMHGVSVEKTERFLRSVMPR</sequence>
<accession>P11124</accession>
<protein>
    <recommendedName>
        <fullName>RNA-directed RNA polymerase</fullName>
        <ecNumber>2.7.7.48</ecNumber>
    </recommendedName>
    <alternativeName>
        <fullName>Protein P2</fullName>
    </alternativeName>
</protein>
<reference key="1">
    <citation type="journal article" date="1988" name="J. Virol.">
        <title>Nucleotide sequence of the large double-stranded RNA segment of bacteriophage phi 6: genes specifying the viral replicase and transcriptase.</title>
        <authorList>
            <person name="Mindich L."/>
            <person name="Nemhauser I."/>
            <person name="Gottlieb P."/>
            <person name="Romantschuk M."/>
            <person name="Carton J."/>
            <person name="Frucht S."/>
            <person name="Strassman J."/>
            <person name="Bamford D.H."/>
            <person name="Kalkkinen N."/>
        </authorList>
    </citation>
    <scope>NUCLEOTIDE SEQUENCE [GENOMIC RNA]</scope>
    <scope>PARTIAL PROTEIN SEQUENCE</scope>
</reference>
<reference key="2">
    <citation type="journal article" date="2012" name="PLoS ONE">
        <title>Protein P7 of the cystovirus phi6 is located at the three-fold axis of the unexpanded procapsid.</title>
        <authorList>
            <person name="Katz G."/>
            <person name="Wei H."/>
            <person name="Alimova A."/>
            <person name="Katz A."/>
            <person name="Morgan D.G."/>
            <person name="Gottlieb P."/>
        </authorList>
    </citation>
    <scope>IDENTIFICATION IN THE PACKAGING COMPLEX</scope>
    <scope>INTERACTION WITH P7</scope>
</reference>
<reference key="3">
    <citation type="journal article" date="2001" name="Nature">
        <title>A mechanism for initiating RNA-dependent RNA polymerization.</title>
        <authorList>
            <person name="Butcher S.J."/>
            <person name="Grimes J.M."/>
            <person name="Makeyev E.V."/>
            <person name="Bamford D.H."/>
            <person name="Stuart D.I."/>
        </authorList>
    </citation>
    <scope>X-RAY CRYSTALLOGRAPHY (2.0 ANGSTROMS)</scope>
</reference>
<reference key="4">
    <citation type="journal article" date="2004" name="Structure">
        <title>The structural basis for RNA specificity and Ca2+ inhibition of an RNA-dependent RNA polymerase.</title>
        <authorList>
            <person name="Salgado P.S."/>
            <person name="Makeyev E.V."/>
            <person name="Butcher S.J."/>
            <person name="Bamford D.H."/>
            <person name="Stuart D.I."/>
            <person name="Grimes J.M."/>
        </authorList>
    </citation>
    <scope>X-RAY CRYSTALLOGRAPHY (1.9 ANGSTROMS)</scope>
</reference>
<reference key="5">
    <citation type="journal article" date="2005" name="J. Gen. Virol.">
        <title>Back-priming mode of phi6 RNA-dependent RNA polymerase.</title>
        <authorList>
            <person name="Laurila M.R."/>
            <person name="Salgado P.S."/>
            <person name="Stuart D.I."/>
            <person name="Grimes J.M."/>
            <person name="Bamford D.H."/>
        </authorList>
    </citation>
    <scope>X-RAY CRYSTALLOGRAPHY (3.0 ANGSTROMS)</scope>
</reference>
<comment type="function">
    <text>Rna-dependent RNA polymerase part of the packaging complex that packages the viral RNA segments, replicate them into a double-stranded form and transcribe them.</text>
</comment>
<comment type="catalytic activity">
    <reaction evidence="1">
        <text>RNA(n) + a ribonucleoside 5'-triphosphate = RNA(n+1) + diphosphate</text>
        <dbReference type="Rhea" id="RHEA:21248"/>
        <dbReference type="Rhea" id="RHEA-COMP:14527"/>
        <dbReference type="Rhea" id="RHEA-COMP:17342"/>
        <dbReference type="ChEBI" id="CHEBI:33019"/>
        <dbReference type="ChEBI" id="CHEBI:61557"/>
        <dbReference type="ChEBI" id="CHEBI:140395"/>
        <dbReference type="EC" id="2.7.7.48"/>
    </reaction>
</comment>
<comment type="cofactor">
    <cofactor>
        <name>Mg(2+)</name>
        <dbReference type="ChEBI" id="CHEBI:18420"/>
    </cofactor>
    <cofactor>
        <name>Mn(2+)</name>
        <dbReference type="ChEBI" id="CHEBI:29035"/>
    </cofactor>
</comment>
<comment type="subunit">
    <text evidence="2">Part of the packaging complex composed of RDRP, P4 and P7. Interacts with P7 (Probable).</text>
</comment>
<comment type="subcellular location">
    <subcellularLocation>
        <location>Virion</location>
    </subcellularLocation>
    <text>Found in the capsid (12 copies). Prior to RNA packaging, localizes on the inner procapsid surface near the three-fold axis of symmetry.</text>
</comment>
<comment type="caution">
    <text evidence="3">Was originally thought to be a capsid protein.</text>
</comment>